<feature type="chain" id="PRO_0000183133" description="Crossover junction endodeoxyribonuclease RuvC">
    <location>
        <begin position="1"/>
        <end position="173"/>
    </location>
</feature>
<feature type="active site" evidence="1">
    <location>
        <position position="8"/>
    </location>
</feature>
<feature type="active site" evidence="1">
    <location>
        <position position="67"/>
    </location>
</feature>
<feature type="active site" evidence="1">
    <location>
        <position position="139"/>
    </location>
</feature>
<feature type="binding site" evidence="1">
    <location>
        <position position="8"/>
    </location>
    <ligand>
        <name>Mg(2+)</name>
        <dbReference type="ChEBI" id="CHEBI:18420"/>
        <label>1</label>
    </ligand>
</feature>
<feature type="binding site" evidence="1">
    <location>
        <position position="67"/>
    </location>
    <ligand>
        <name>Mg(2+)</name>
        <dbReference type="ChEBI" id="CHEBI:18420"/>
        <label>2</label>
    </ligand>
</feature>
<feature type="binding site" evidence="1">
    <location>
        <position position="139"/>
    </location>
    <ligand>
        <name>Mg(2+)</name>
        <dbReference type="ChEBI" id="CHEBI:18420"/>
        <label>1</label>
    </ligand>
</feature>
<dbReference type="EC" id="3.1.21.10" evidence="1"/>
<dbReference type="EMBL" id="AE005674">
    <property type="protein sequence ID" value="AAN43430.2"/>
    <property type="molecule type" value="Genomic_DNA"/>
</dbReference>
<dbReference type="EMBL" id="AE014073">
    <property type="protein sequence ID" value="AAP17253.1"/>
    <property type="molecule type" value="Genomic_DNA"/>
</dbReference>
<dbReference type="RefSeq" id="NP_707723.2">
    <property type="nucleotide sequence ID" value="NC_004337.2"/>
</dbReference>
<dbReference type="RefSeq" id="WP_000974712.1">
    <property type="nucleotide sequence ID" value="NZ_WPGW01000041.1"/>
</dbReference>
<dbReference type="SMR" id="Q7UAE7"/>
<dbReference type="STRING" id="198214.SF1873"/>
<dbReference type="PaxDb" id="198214-SF1873"/>
<dbReference type="GeneID" id="1025092"/>
<dbReference type="KEGG" id="sfl:SF1873"/>
<dbReference type="KEGG" id="sfx:S1939"/>
<dbReference type="PATRIC" id="fig|198214.7.peg.2231"/>
<dbReference type="HOGENOM" id="CLU_091257_2_1_6"/>
<dbReference type="Proteomes" id="UP000001006">
    <property type="component" value="Chromosome"/>
</dbReference>
<dbReference type="Proteomes" id="UP000002673">
    <property type="component" value="Chromosome"/>
</dbReference>
<dbReference type="GO" id="GO:0005737">
    <property type="term" value="C:cytoplasm"/>
    <property type="evidence" value="ECO:0007669"/>
    <property type="project" value="UniProtKB-SubCell"/>
</dbReference>
<dbReference type="GO" id="GO:0048476">
    <property type="term" value="C:Holliday junction resolvase complex"/>
    <property type="evidence" value="ECO:0007669"/>
    <property type="project" value="UniProtKB-UniRule"/>
</dbReference>
<dbReference type="GO" id="GO:0008821">
    <property type="term" value="F:crossover junction DNA endonuclease activity"/>
    <property type="evidence" value="ECO:0007669"/>
    <property type="project" value="UniProtKB-UniRule"/>
</dbReference>
<dbReference type="GO" id="GO:0003677">
    <property type="term" value="F:DNA binding"/>
    <property type="evidence" value="ECO:0007669"/>
    <property type="project" value="UniProtKB-KW"/>
</dbReference>
<dbReference type="GO" id="GO:0000287">
    <property type="term" value="F:magnesium ion binding"/>
    <property type="evidence" value="ECO:0007669"/>
    <property type="project" value="UniProtKB-UniRule"/>
</dbReference>
<dbReference type="GO" id="GO:0006310">
    <property type="term" value="P:DNA recombination"/>
    <property type="evidence" value="ECO:0007669"/>
    <property type="project" value="UniProtKB-UniRule"/>
</dbReference>
<dbReference type="GO" id="GO:0006281">
    <property type="term" value="P:DNA repair"/>
    <property type="evidence" value="ECO:0007669"/>
    <property type="project" value="UniProtKB-UniRule"/>
</dbReference>
<dbReference type="CDD" id="cd16962">
    <property type="entry name" value="RuvC"/>
    <property type="match status" value="1"/>
</dbReference>
<dbReference type="FunFam" id="3.30.420.10:FF:000002">
    <property type="entry name" value="Crossover junction endodeoxyribonuclease RuvC"/>
    <property type="match status" value="1"/>
</dbReference>
<dbReference type="Gene3D" id="3.30.420.10">
    <property type="entry name" value="Ribonuclease H-like superfamily/Ribonuclease H"/>
    <property type="match status" value="1"/>
</dbReference>
<dbReference type="HAMAP" id="MF_00034">
    <property type="entry name" value="RuvC"/>
    <property type="match status" value="1"/>
</dbReference>
<dbReference type="InterPro" id="IPR012337">
    <property type="entry name" value="RNaseH-like_sf"/>
</dbReference>
<dbReference type="InterPro" id="IPR036397">
    <property type="entry name" value="RNaseH_sf"/>
</dbReference>
<dbReference type="InterPro" id="IPR020563">
    <property type="entry name" value="X-over_junc_endoDNase_Mg_BS"/>
</dbReference>
<dbReference type="InterPro" id="IPR002176">
    <property type="entry name" value="X-over_junc_endoDNase_RuvC"/>
</dbReference>
<dbReference type="NCBIfam" id="NF000711">
    <property type="entry name" value="PRK00039.2-1"/>
    <property type="match status" value="1"/>
</dbReference>
<dbReference type="NCBIfam" id="TIGR00228">
    <property type="entry name" value="ruvC"/>
    <property type="match status" value="1"/>
</dbReference>
<dbReference type="PANTHER" id="PTHR30194">
    <property type="entry name" value="CROSSOVER JUNCTION ENDODEOXYRIBONUCLEASE RUVC"/>
    <property type="match status" value="1"/>
</dbReference>
<dbReference type="PANTHER" id="PTHR30194:SF3">
    <property type="entry name" value="CROSSOVER JUNCTION ENDODEOXYRIBONUCLEASE RUVC"/>
    <property type="match status" value="1"/>
</dbReference>
<dbReference type="Pfam" id="PF02075">
    <property type="entry name" value="RuvC"/>
    <property type="match status" value="1"/>
</dbReference>
<dbReference type="PRINTS" id="PR00696">
    <property type="entry name" value="RSOLVASERUVC"/>
</dbReference>
<dbReference type="SUPFAM" id="SSF53098">
    <property type="entry name" value="Ribonuclease H-like"/>
    <property type="match status" value="1"/>
</dbReference>
<dbReference type="PROSITE" id="PS01321">
    <property type="entry name" value="RUVC"/>
    <property type="match status" value="1"/>
</dbReference>
<gene>
    <name evidence="1" type="primary">ruvC</name>
    <name type="ordered locus">SF1873</name>
    <name type="ordered locus">S1939</name>
</gene>
<proteinExistence type="inferred from homology"/>
<protein>
    <recommendedName>
        <fullName evidence="1">Crossover junction endodeoxyribonuclease RuvC</fullName>
        <ecNumber evidence="1">3.1.21.10</ecNumber>
    </recommendedName>
    <alternativeName>
        <fullName evidence="1">Holliday junction nuclease RuvC</fullName>
    </alternativeName>
    <alternativeName>
        <fullName evidence="1">Holliday junction resolvase RuvC</fullName>
    </alternativeName>
</protein>
<keyword id="KW-0963">Cytoplasm</keyword>
<keyword id="KW-0227">DNA damage</keyword>
<keyword id="KW-0233">DNA recombination</keyword>
<keyword id="KW-0234">DNA repair</keyword>
<keyword id="KW-0238">DNA-binding</keyword>
<keyword id="KW-0255">Endonuclease</keyword>
<keyword id="KW-0378">Hydrolase</keyword>
<keyword id="KW-0460">Magnesium</keyword>
<keyword id="KW-0479">Metal-binding</keyword>
<keyword id="KW-0540">Nuclease</keyword>
<keyword id="KW-1185">Reference proteome</keyword>
<reference key="1">
    <citation type="journal article" date="2002" name="Nucleic Acids Res.">
        <title>Genome sequence of Shigella flexneri 2a: insights into pathogenicity through comparison with genomes of Escherichia coli K12 and O157.</title>
        <authorList>
            <person name="Jin Q."/>
            <person name="Yuan Z."/>
            <person name="Xu J."/>
            <person name="Wang Y."/>
            <person name="Shen Y."/>
            <person name="Lu W."/>
            <person name="Wang J."/>
            <person name="Liu H."/>
            <person name="Yang J."/>
            <person name="Yang F."/>
            <person name="Zhang X."/>
            <person name="Zhang J."/>
            <person name="Yang G."/>
            <person name="Wu H."/>
            <person name="Qu D."/>
            <person name="Dong J."/>
            <person name="Sun L."/>
            <person name="Xue Y."/>
            <person name="Zhao A."/>
            <person name="Gao Y."/>
            <person name="Zhu J."/>
            <person name="Kan B."/>
            <person name="Ding K."/>
            <person name="Chen S."/>
            <person name="Cheng H."/>
            <person name="Yao Z."/>
            <person name="He B."/>
            <person name="Chen R."/>
            <person name="Ma D."/>
            <person name="Qiang B."/>
            <person name="Wen Y."/>
            <person name="Hou Y."/>
            <person name="Yu J."/>
        </authorList>
    </citation>
    <scope>NUCLEOTIDE SEQUENCE [LARGE SCALE GENOMIC DNA]</scope>
    <source>
        <strain>301 / Serotype 2a</strain>
    </source>
</reference>
<reference key="2">
    <citation type="journal article" date="2003" name="Infect. Immun.">
        <title>Complete genome sequence and comparative genomics of Shigella flexneri serotype 2a strain 2457T.</title>
        <authorList>
            <person name="Wei J."/>
            <person name="Goldberg M.B."/>
            <person name="Burland V."/>
            <person name="Venkatesan M.M."/>
            <person name="Deng W."/>
            <person name="Fournier G."/>
            <person name="Mayhew G.F."/>
            <person name="Plunkett G. III"/>
            <person name="Rose D.J."/>
            <person name="Darling A."/>
            <person name="Mau B."/>
            <person name="Perna N.T."/>
            <person name="Payne S.M."/>
            <person name="Runyen-Janecky L.J."/>
            <person name="Zhou S."/>
            <person name="Schwartz D.C."/>
            <person name="Blattner F.R."/>
        </authorList>
    </citation>
    <scope>NUCLEOTIDE SEQUENCE [LARGE SCALE GENOMIC DNA]</scope>
    <source>
        <strain>ATCC 700930 / 2457T / Serotype 2a</strain>
    </source>
</reference>
<organism>
    <name type="scientific">Shigella flexneri</name>
    <dbReference type="NCBI Taxonomy" id="623"/>
    <lineage>
        <taxon>Bacteria</taxon>
        <taxon>Pseudomonadati</taxon>
        <taxon>Pseudomonadota</taxon>
        <taxon>Gammaproteobacteria</taxon>
        <taxon>Enterobacterales</taxon>
        <taxon>Enterobacteriaceae</taxon>
        <taxon>Shigella</taxon>
    </lineage>
</organism>
<accession>Q7UAE7</accession>
<accession>Q83R66</accession>
<name>RUVC_SHIFL</name>
<comment type="function">
    <text evidence="1">The RuvA-RuvB-RuvC complex processes Holliday junction (HJ) DNA during genetic recombination and DNA repair. Endonuclease that resolves HJ intermediates. Cleaves cruciform DNA by making single-stranded nicks across the HJ at symmetrical positions within the homologous arms, yielding a 5'-phosphate and a 3'-hydroxyl group; requires a central core of homology in the junction. The consensus cleavage sequence is 5'-(A/T)TT(C/G)-3'. Cleavage occurs on the 3'-side of the TT dinucleotide at the point of strand exchange. HJ branch migration catalyzed by RuvA-RuvB allows RuvC to scan DNA until it finds its consensus sequence, where it cleaves and resolves the cruciform DNA.</text>
</comment>
<comment type="catalytic activity">
    <reaction evidence="1">
        <text>Endonucleolytic cleavage at a junction such as a reciprocal single-stranded crossover between two homologous DNA duplexes (Holliday junction).</text>
        <dbReference type="EC" id="3.1.21.10"/>
    </reaction>
</comment>
<comment type="cofactor">
    <cofactor evidence="1">
        <name>Mg(2+)</name>
        <dbReference type="ChEBI" id="CHEBI:18420"/>
    </cofactor>
    <text evidence="1">Binds 2 Mg(2+) ion per subunit.</text>
</comment>
<comment type="subunit">
    <text evidence="1">Homodimer which binds Holliday junction (HJ) DNA. The HJ becomes 2-fold symmetrical on binding to RuvC with unstacked arms; it has a different conformation from HJ DNA in complex with RuvA. In the full resolvosome a probable DNA-RuvA(4)-RuvB(12)-RuvC(2) complex forms which resolves the HJ.</text>
</comment>
<comment type="subcellular location">
    <subcellularLocation>
        <location evidence="1">Cytoplasm</location>
    </subcellularLocation>
</comment>
<comment type="similarity">
    <text evidence="1">Belongs to the RuvC family.</text>
</comment>
<sequence length="173" mass="18795">MAIILGIDPGSRVTGYGVIRQVGRQLSYLGSGCIRTKVDDLPSRLKLIYAGVTEIITQFQPDYFAIEQVFMAKNADSALKLGQARGVAIVAAVNQELPVFEYAARQVKQTVVGMGSAEKSQVQHMVRTLLKLPANPQADAADALAIAITHCHVSQNAMQMSESRLNLTRGRLR</sequence>
<evidence type="ECO:0000255" key="1">
    <source>
        <dbReference type="HAMAP-Rule" id="MF_00034"/>
    </source>
</evidence>